<sequence length="234" mass="27428">MTENFILGRNNKLEHELKALADYINIPYSILQPYQSECFVRHYTKGQVIYFSPQESSNIYFLIEGNIIREHYNQNGDVYRYFNKEQVLFPISNLFHPKEVNELCTALTDCTVLGLPRELMAFLCKANDDIFLTLFALINDNEQQHMNYNMALTSKFAKDRIIKLLCHLCQTVGYDQDEFYEIKQFLTIQLMSDMAGISRETAGHIIHELKDEKLVVKDHKNWLVSKHLFNDVCV</sequence>
<keyword id="KW-0010">Activator</keyword>
<keyword id="KW-0114">cAMP</keyword>
<keyword id="KW-0116">cAMP-binding</keyword>
<keyword id="KW-0963">Cytoplasm</keyword>
<keyword id="KW-0238">DNA-binding</keyword>
<keyword id="KW-0547">Nucleotide-binding</keyword>
<keyword id="KW-0804">Transcription</keyword>
<keyword id="KW-0805">Transcription regulation</keyword>
<name>ARCR_STAAN</name>
<dbReference type="EMBL" id="BA000018">
    <property type="protein sequence ID" value="BAB43729.1"/>
    <property type="molecule type" value="Genomic_DNA"/>
</dbReference>
<dbReference type="PIR" id="G90070">
    <property type="entry name" value="G90070"/>
</dbReference>
<dbReference type="RefSeq" id="WP_000138218.1">
    <property type="nucleotide sequence ID" value="NC_002745.2"/>
</dbReference>
<dbReference type="SMR" id="Q7A381"/>
<dbReference type="EnsemblBacteria" id="BAB43729">
    <property type="protein sequence ID" value="BAB43729"/>
    <property type="gene ID" value="BAB43729"/>
</dbReference>
<dbReference type="KEGG" id="sau:SA2424"/>
<dbReference type="HOGENOM" id="CLU_1160528_0_0_9"/>
<dbReference type="GO" id="GO:0005737">
    <property type="term" value="C:cytoplasm"/>
    <property type="evidence" value="ECO:0007669"/>
    <property type="project" value="UniProtKB-SubCell"/>
</dbReference>
<dbReference type="GO" id="GO:0030552">
    <property type="term" value="F:cAMP binding"/>
    <property type="evidence" value="ECO:0007669"/>
    <property type="project" value="UniProtKB-KW"/>
</dbReference>
<dbReference type="GO" id="GO:0003677">
    <property type="term" value="F:DNA binding"/>
    <property type="evidence" value="ECO:0007669"/>
    <property type="project" value="UniProtKB-KW"/>
</dbReference>
<dbReference type="GO" id="GO:0006355">
    <property type="term" value="P:regulation of DNA-templated transcription"/>
    <property type="evidence" value="ECO:0007669"/>
    <property type="project" value="InterPro"/>
</dbReference>
<dbReference type="Gene3D" id="2.60.120.10">
    <property type="entry name" value="Jelly Rolls"/>
    <property type="match status" value="1"/>
</dbReference>
<dbReference type="Gene3D" id="1.10.10.10">
    <property type="entry name" value="Winged helix-like DNA-binding domain superfamily/Winged helix DNA-binding domain"/>
    <property type="match status" value="1"/>
</dbReference>
<dbReference type="InterPro" id="IPR000595">
    <property type="entry name" value="cNMP-bd_dom"/>
</dbReference>
<dbReference type="InterPro" id="IPR018490">
    <property type="entry name" value="cNMP-bd_dom_sf"/>
</dbReference>
<dbReference type="InterPro" id="IPR012318">
    <property type="entry name" value="HTH_CRP"/>
</dbReference>
<dbReference type="InterPro" id="IPR014710">
    <property type="entry name" value="RmlC-like_jellyroll"/>
</dbReference>
<dbReference type="InterPro" id="IPR036388">
    <property type="entry name" value="WH-like_DNA-bd_sf"/>
</dbReference>
<dbReference type="InterPro" id="IPR036390">
    <property type="entry name" value="WH_DNA-bd_sf"/>
</dbReference>
<dbReference type="Pfam" id="PF00027">
    <property type="entry name" value="cNMP_binding"/>
    <property type="match status" value="1"/>
</dbReference>
<dbReference type="Pfam" id="PF13545">
    <property type="entry name" value="HTH_Crp_2"/>
    <property type="match status" value="1"/>
</dbReference>
<dbReference type="SUPFAM" id="SSF51206">
    <property type="entry name" value="cAMP-binding domain-like"/>
    <property type="match status" value="1"/>
</dbReference>
<dbReference type="SUPFAM" id="SSF46785">
    <property type="entry name" value="Winged helix' DNA-binding domain"/>
    <property type="match status" value="1"/>
</dbReference>
<dbReference type="PROSITE" id="PS51063">
    <property type="entry name" value="HTH_CRP_2"/>
    <property type="match status" value="1"/>
</dbReference>
<accession>Q7A381</accession>
<organism>
    <name type="scientific">Staphylococcus aureus (strain N315)</name>
    <dbReference type="NCBI Taxonomy" id="158879"/>
    <lineage>
        <taxon>Bacteria</taxon>
        <taxon>Bacillati</taxon>
        <taxon>Bacillota</taxon>
        <taxon>Bacilli</taxon>
        <taxon>Bacillales</taxon>
        <taxon>Staphylococcaceae</taxon>
        <taxon>Staphylococcus</taxon>
    </lineage>
</organism>
<gene>
    <name type="primary">arcR</name>
    <name type="ordered locus">SA2424</name>
</gene>
<reference key="1">
    <citation type="journal article" date="2001" name="Lancet">
        <title>Whole genome sequencing of meticillin-resistant Staphylococcus aureus.</title>
        <authorList>
            <person name="Kuroda M."/>
            <person name="Ohta T."/>
            <person name="Uchiyama I."/>
            <person name="Baba T."/>
            <person name="Yuzawa H."/>
            <person name="Kobayashi I."/>
            <person name="Cui L."/>
            <person name="Oguchi A."/>
            <person name="Aoki K."/>
            <person name="Nagai Y."/>
            <person name="Lian J.-Q."/>
            <person name="Ito T."/>
            <person name="Kanamori M."/>
            <person name="Matsumaru H."/>
            <person name="Maruyama A."/>
            <person name="Murakami H."/>
            <person name="Hosoyama A."/>
            <person name="Mizutani-Ui Y."/>
            <person name="Takahashi N.K."/>
            <person name="Sawano T."/>
            <person name="Inoue R."/>
            <person name="Kaito C."/>
            <person name="Sekimizu K."/>
            <person name="Hirakawa H."/>
            <person name="Kuhara S."/>
            <person name="Goto S."/>
            <person name="Yabuzaki J."/>
            <person name="Kanehisa M."/>
            <person name="Yamashita A."/>
            <person name="Oshima K."/>
            <person name="Furuya K."/>
            <person name="Yoshino C."/>
            <person name="Shiba T."/>
            <person name="Hattori M."/>
            <person name="Ogasawara N."/>
            <person name="Hayashi H."/>
            <person name="Hiramatsu K."/>
        </authorList>
    </citation>
    <scope>NUCLEOTIDE SEQUENCE [LARGE SCALE GENOMIC DNA]</scope>
    <source>
        <strain>N315</strain>
    </source>
</reference>
<reference key="2">
    <citation type="submission" date="2007-10" db="UniProtKB">
        <title>Shotgun proteomic analysis of total and membrane protein extracts of S. aureus strain N315.</title>
        <authorList>
            <person name="Vaezzadeh A.R."/>
            <person name="Deshusses J."/>
            <person name="Lescuyer P."/>
            <person name="Hochstrasser D.F."/>
        </authorList>
    </citation>
    <scope>IDENTIFICATION BY MASS SPECTROMETRY [LARGE SCALE ANALYSIS]</scope>
    <source>
        <strain>N315</strain>
    </source>
</reference>
<feature type="chain" id="PRO_0000349413" description="HTH-type transcriptional regulator ArcR">
    <location>
        <begin position="1"/>
        <end position="234"/>
    </location>
</feature>
<feature type="domain" description="HTH crp-type" evidence="2">
    <location>
        <begin position="155"/>
        <end position="228"/>
    </location>
</feature>
<feature type="DNA-binding region" description="H-T-H motif" evidence="2">
    <location>
        <begin position="188"/>
        <end position="207"/>
    </location>
</feature>
<feature type="binding site">
    <location>
        <begin position="40"/>
        <end position="129"/>
    </location>
    <ligand>
        <name>a nucleoside 3',5'-cyclic phosphate</name>
        <dbReference type="ChEBI" id="CHEBI:58464"/>
    </ligand>
</feature>
<protein>
    <recommendedName>
        <fullName>HTH-type transcriptional regulator ArcR</fullName>
    </recommendedName>
</protein>
<proteinExistence type="evidence at protein level"/>
<evidence type="ECO:0000250" key="1"/>
<evidence type="ECO:0000255" key="2">
    <source>
        <dbReference type="PROSITE-ProRule" id="PRU00387"/>
    </source>
</evidence>
<comment type="function">
    <text evidence="1">Positively regulates the expression of the arcABDCR operon under anaerobic conditions, thus playing an essential role in arginine catabolism. May also control the expression of genes encoding proteins which are involved in anaerobic metabolism. Can bind cyclic AMP (By similarity).</text>
</comment>
<comment type="subcellular location">
    <subcellularLocation>
        <location evidence="1">Cytoplasm</location>
    </subcellularLocation>
</comment>